<sequence length="82" mass="9282">MLPFVHEQIGTIIVNFFILTVVCAITLVVCLAILTAIRLCVQCASGVNTLLFVPAFYIYNTGRNAYFKFQENRPPFPPEDWV</sequence>
<feature type="chain" id="PRO_0000290328" description="Envelope small membrane protein">
    <location>
        <begin position="1"/>
        <end position="82"/>
    </location>
</feature>
<feature type="topological domain" description="Virion surface" evidence="1">
    <location>
        <begin position="1"/>
        <end position="16"/>
    </location>
</feature>
<feature type="transmembrane region" description="Helical" evidence="1">
    <location>
        <begin position="17"/>
        <end position="37"/>
    </location>
</feature>
<feature type="topological domain" description="Intravirion" evidence="1">
    <location>
        <begin position="38"/>
        <end position="78"/>
    </location>
</feature>
<reference key="1">
    <citation type="journal article" date="2007" name="J. Virol.">
        <title>Comparative analysis of twelve genomes of three novel group 2c and group 2d coronaviruses reveals unique group and subgroup features.</title>
        <authorList>
            <person name="Woo P.C.Y."/>
            <person name="Wang M."/>
            <person name="Lau S.K.P."/>
            <person name="Xu H.F."/>
            <person name="Poon R.W.S."/>
            <person name="Guo R."/>
            <person name="Wong B.H.L."/>
            <person name="Gao K."/>
            <person name="Tsoi H.-W."/>
            <person name="Huang Y."/>
            <person name="Li K.S.M."/>
            <person name="Lam C.S.F."/>
            <person name="Chan K.-H."/>
            <person name="Zheng B.-J."/>
            <person name="Yuen K.-Y."/>
        </authorList>
    </citation>
    <scope>NUCLEOTIDE SEQUENCE [GENOMIC RNA]</scope>
    <source>
        <strain>Isolate HKU4-1</strain>
    </source>
</reference>
<organismHost>
    <name type="scientific">Tylonycteris pachypus</name>
    <name type="common">Lesser bamboo bat</name>
    <name type="synonym">Vespertilio pachypus</name>
    <dbReference type="NCBI Taxonomy" id="258959"/>
</organismHost>
<organism>
    <name type="scientific">Bat coronavirus HKU4</name>
    <name type="common">BtCoV</name>
    <name type="synonym">BtCoV/HKU4/2004</name>
    <dbReference type="NCBI Taxonomy" id="694007"/>
    <lineage>
        <taxon>Viruses</taxon>
        <taxon>Riboviria</taxon>
        <taxon>Orthornavirae</taxon>
        <taxon>Pisuviricota</taxon>
        <taxon>Pisoniviricetes</taxon>
        <taxon>Nidovirales</taxon>
        <taxon>Cornidovirineae</taxon>
        <taxon>Coronaviridae</taxon>
        <taxon>Orthocoronavirinae</taxon>
        <taxon>Betacoronavirus</taxon>
        <taxon>Merbecovirus</taxon>
    </lineage>
</organism>
<evidence type="ECO:0000255" key="1">
    <source>
        <dbReference type="HAMAP-Rule" id="MF_04204"/>
    </source>
</evidence>
<dbReference type="EMBL" id="EF065505">
    <property type="protein sequence ID" value="ABN10844.1"/>
    <property type="molecule type" value="Genomic_RNA"/>
</dbReference>
<dbReference type="RefSeq" id="YP_001039958.1">
    <property type="nucleotide sequence ID" value="NC_009019.1"/>
</dbReference>
<dbReference type="SMR" id="A3EX99"/>
<dbReference type="IntAct" id="A3EX99">
    <property type="interactions" value="1"/>
</dbReference>
<dbReference type="MINT" id="A3EX99"/>
<dbReference type="GeneID" id="4835997"/>
<dbReference type="KEGG" id="vg:4835997"/>
<dbReference type="OrthoDB" id="24088at10239"/>
<dbReference type="Proteomes" id="UP000006574">
    <property type="component" value="Genome"/>
</dbReference>
<dbReference type="GO" id="GO:0044178">
    <property type="term" value="C:host cell Golgi membrane"/>
    <property type="evidence" value="ECO:0007669"/>
    <property type="project" value="UniProtKB-SubCell"/>
</dbReference>
<dbReference type="GO" id="GO:0016020">
    <property type="term" value="C:membrane"/>
    <property type="evidence" value="ECO:0007669"/>
    <property type="project" value="UniProtKB-UniRule"/>
</dbReference>
<dbReference type="GO" id="GO:0140975">
    <property type="term" value="P:disruption of cellular anatomical structure in another organism"/>
    <property type="evidence" value="ECO:0007669"/>
    <property type="project" value="UniProtKB-UniRule"/>
</dbReference>
<dbReference type="GO" id="GO:0046760">
    <property type="term" value="P:viral budding from Golgi membrane"/>
    <property type="evidence" value="ECO:0007669"/>
    <property type="project" value="UniProtKB-UniRule"/>
</dbReference>
<dbReference type="CDD" id="cd21533">
    <property type="entry name" value="MERS-CoV-like_E"/>
    <property type="match status" value="1"/>
</dbReference>
<dbReference type="Gene3D" id="6.10.250.1810">
    <property type="match status" value="1"/>
</dbReference>
<dbReference type="HAMAP" id="MF_04204">
    <property type="entry name" value="BETA_CORONA_E"/>
    <property type="match status" value="1"/>
</dbReference>
<dbReference type="InterPro" id="IPR044379">
    <property type="entry name" value="E_MERS-CoV-like"/>
</dbReference>
<dbReference type="InterPro" id="IPR043506">
    <property type="entry name" value="E_protein_bCoV"/>
</dbReference>
<dbReference type="InterPro" id="IPR003873">
    <property type="entry name" value="E_protein_CoV"/>
</dbReference>
<dbReference type="Pfam" id="PF02723">
    <property type="entry name" value="CoV_E"/>
    <property type="match status" value="1"/>
</dbReference>
<dbReference type="PROSITE" id="PS51926">
    <property type="entry name" value="COV_E"/>
    <property type="match status" value="1"/>
</dbReference>
<gene>
    <name evidence="1" type="primary">E</name>
    <name type="synonym">sM</name>
    <name type="ORF">4</name>
</gene>
<name>VEMP_BCHK4</name>
<comment type="function">
    <text evidence="1">Plays a central role in virus morphogenesis and assembly. Acts as a viroporin and self-assembles in host membranes forming pentameric protein-lipid pores that allow ion transport. Also plays a role in the induction of apoptosis.</text>
</comment>
<comment type="subunit">
    <text evidence="1">Homopentamer. Interacts with membrane protein M in the budding compartment of the host cell, which is located between endoplasmic reticulum and the Golgi complex. Interacts with Nucleoprotein.</text>
</comment>
<comment type="subcellular location">
    <subcellularLocation>
        <location evidence="1">Host Golgi apparatus membrane</location>
        <topology evidence="1">Single-pass type III membrane protein</topology>
    </subcellularLocation>
    <text evidence="1">The cytoplasmic tail functions as a Golgi complex-targeting signal.</text>
</comment>
<comment type="similarity">
    <text evidence="1">Belongs to the betacoronaviruses E protein family.</text>
</comment>
<accession>A3EX99</accession>
<protein>
    <recommendedName>
        <fullName evidence="1">Envelope small membrane protein</fullName>
        <shortName evidence="1">E protein</shortName>
        <shortName evidence="1">sM protein</shortName>
    </recommendedName>
</protein>
<proteinExistence type="inferred from homology"/>
<keyword id="KW-0053">Apoptosis</keyword>
<keyword id="KW-1040">Host Golgi apparatus</keyword>
<keyword id="KW-1043">Host membrane</keyword>
<keyword id="KW-0472">Membrane</keyword>
<keyword id="KW-1185">Reference proteome</keyword>
<keyword id="KW-0812">Transmembrane</keyword>
<keyword id="KW-1133">Transmembrane helix</keyword>